<sequence>MATVSMRDMLQAGVHFGHQTRYWNPKMKPFIFGARNKVHIINLEKTVPMFNEALAELTKISSRKGKILFVGTKRAASEAVKEAANNCDQFFVNHRWLGGMLTNWKTVRQSIKRLKDLEIQSQDGTFDKLTKKEALMRTRELNKLENSLGGIKDMGGLPDALFVVDADHEHIAIKEANNLGIPVFSIVDTNSDPDGVDFIIPGNDDAIRAVKLYLGAVATAVREGRSQDLAVQAEESFVEAE</sequence>
<gene>
    <name evidence="1" type="primary">rpsB</name>
    <name type="ordered locus">YPK_1066</name>
</gene>
<keyword id="KW-0687">Ribonucleoprotein</keyword>
<keyword id="KW-0689">Ribosomal protein</keyword>
<name>RS2_YERPY</name>
<protein>
    <recommendedName>
        <fullName evidence="1">Small ribosomal subunit protein uS2</fullName>
    </recommendedName>
    <alternativeName>
        <fullName evidence="2">30S ribosomal protein S2</fullName>
    </alternativeName>
</protein>
<proteinExistence type="inferred from homology"/>
<accession>B1JQG0</accession>
<reference key="1">
    <citation type="submission" date="2008-02" db="EMBL/GenBank/DDBJ databases">
        <title>Complete sequence of Yersinia pseudotuberculosis YPIII.</title>
        <authorList>
            <consortium name="US DOE Joint Genome Institute"/>
            <person name="Copeland A."/>
            <person name="Lucas S."/>
            <person name="Lapidus A."/>
            <person name="Glavina del Rio T."/>
            <person name="Dalin E."/>
            <person name="Tice H."/>
            <person name="Bruce D."/>
            <person name="Goodwin L."/>
            <person name="Pitluck S."/>
            <person name="Munk A.C."/>
            <person name="Brettin T."/>
            <person name="Detter J.C."/>
            <person name="Han C."/>
            <person name="Tapia R."/>
            <person name="Schmutz J."/>
            <person name="Larimer F."/>
            <person name="Land M."/>
            <person name="Hauser L."/>
            <person name="Challacombe J.F."/>
            <person name="Green L."/>
            <person name="Lindler L.E."/>
            <person name="Nikolich M.P."/>
            <person name="Richardson P."/>
        </authorList>
    </citation>
    <scope>NUCLEOTIDE SEQUENCE [LARGE SCALE GENOMIC DNA]</scope>
    <source>
        <strain>YPIII</strain>
    </source>
</reference>
<feature type="chain" id="PRO_1000115081" description="Small ribosomal subunit protein uS2">
    <location>
        <begin position="1"/>
        <end position="241"/>
    </location>
</feature>
<evidence type="ECO:0000255" key="1">
    <source>
        <dbReference type="HAMAP-Rule" id="MF_00291"/>
    </source>
</evidence>
<evidence type="ECO:0000305" key="2"/>
<organism>
    <name type="scientific">Yersinia pseudotuberculosis serotype O:3 (strain YPIII)</name>
    <dbReference type="NCBI Taxonomy" id="502800"/>
    <lineage>
        <taxon>Bacteria</taxon>
        <taxon>Pseudomonadati</taxon>
        <taxon>Pseudomonadota</taxon>
        <taxon>Gammaproteobacteria</taxon>
        <taxon>Enterobacterales</taxon>
        <taxon>Yersiniaceae</taxon>
        <taxon>Yersinia</taxon>
    </lineage>
</organism>
<dbReference type="EMBL" id="CP000950">
    <property type="protein sequence ID" value="ACA67367.1"/>
    <property type="molecule type" value="Genomic_DNA"/>
</dbReference>
<dbReference type="RefSeq" id="WP_002221800.1">
    <property type="nucleotide sequence ID" value="NZ_CP009792.1"/>
</dbReference>
<dbReference type="SMR" id="B1JQG0"/>
<dbReference type="GeneID" id="57977517"/>
<dbReference type="KEGG" id="ypy:YPK_1066"/>
<dbReference type="PATRIC" id="fig|502800.11.peg.1698"/>
<dbReference type="GO" id="GO:0022627">
    <property type="term" value="C:cytosolic small ribosomal subunit"/>
    <property type="evidence" value="ECO:0007669"/>
    <property type="project" value="TreeGrafter"/>
</dbReference>
<dbReference type="GO" id="GO:0003735">
    <property type="term" value="F:structural constituent of ribosome"/>
    <property type="evidence" value="ECO:0007669"/>
    <property type="project" value="InterPro"/>
</dbReference>
<dbReference type="GO" id="GO:0006412">
    <property type="term" value="P:translation"/>
    <property type="evidence" value="ECO:0007669"/>
    <property type="project" value="UniProtKB-UniRule"/>
</dbReference>
<dbReference type="CDD" id="cd01425">
    <property type="entry name" value="RPS2"/>
    <property type="match status" value="1"/>
</dbReference>
<dbReference type="FunFam" id="1.10.287.610:FF:000001">
    <property type="entry name" value="30S ribosomal protein S2"/>
    <property type="match status" value="1"/>
</dbReference>
<dbReference type="Gene3D" id="3.40.50.10490">
    <property type="entry name" value="Glucose-6-phosphate isomerase like protein, domain 1"/>
    <property type="match status" value="1"/>
</dbReference>
<dbReference type="Gene3D" id="1.10.287.610">
    <property type="entry name" value="Helix hairpin bin"/>
    <property type="match status" value="1"/>
</dbReference>
<dbReference type="HAMAP" id="MF_00291_B">
    <property type="entry name" value="Ribosomal_uS2_B"/>
    <property type="match status" value="1"/>
</dbReference>
<dbReference type="InterPro" id="IPR001865">
    <property type="entry name" value="Ribosomal_uS2"/>
</dbReference>
<dbReference type="InterPro" id="IPR005706">
    <property type="entry name" value="Ribosomal_uS2_bac/mit/plastid"/>
</dbReference>
<dbReference type="InterPro" id="IPR018130">
    <property type="entry name" value="Ribosomal_uS2_CS"/>
</dbReference>
<dbReference type="InterPro" id="IPR023591">
    <property type="entry name" value="Ribosomal_uS2_flav_dom_sf"/>
</dbReference>
<dbReference type="NCBIfam" id="TIGR01011">
    <property type="entry name" value="rpsB_bact"/>
    <property type="match status" value="1"/>
</dbReference>
<dbReference type="PANTHER" id="PTHR12534">
    <property type="entry name" value="30S RIBOSOMAL PROTEIN S2 PROKARYOTIC AND ORGANELLAR"/>
    <property type="match status" value="1"/>
</dbReference>
<dbReference type="PANTHER" id="PTHR12534:SF0">
    <property type="entry name" value="SMALL RIBOSOMAL SUBUNIT PROTEIN US2M"/>
    <property type="match status" value="1"/>
</dbReference>
<dbReference type="Pfam" id="PF00318">
    <property type="entry name" value="Ribosomal_S2"/>
    <property type="match status" value="1"/>
</dbReference>
<dbReference type="PRINTS" id="PR00395">
    <property type="entry name" value="RIBOSOMALS2"/>
</dbReference>
<dbReference type="SUPFAM" id="SSF52313">
    <property type="entry name" value="Ribosomal protein S2"/>
    <property type="match status" value="1"/>
</dbReference>
<dbReference type="PROSITE" id="PS00962">
    <property type="entry name" value="RIBOSOMAL_S2_1"/>
    <property type="match status" value="1"/>
</dbReference>
<dbReference type="PROSITE" id="PS00963">
    <property type="entry name" value="RIBOSOMAL_S2_2"/>
    <property type="match status" value="1"/>
</dbReference>
<comment type="similarity">
    <text evidence="1">Belongs to the universal ribosomal protein uS2 family.</text>
</comment>